<dbReference type="EMBL" id="AP000423">
    <property type="protein sequence ID" value="BAA84372.1"/>
    <property type="molecule type" value="Genomic_DNA"/>
</dbReference>
<dbReference type="RefSeq" id="NP_051046.1">
    <property type="nucleotide sequence ID" value="NC_000932.1"/>
</dbReference>
<dbReference type="SMR" id="P56760"/>
<dbReference type="BioGRID" id="29982">
    <property type="interactions" value="1"/>
</dbReference>
<dbReference type="FunCoup" id="P56760">
    <property type="interactions" value="102"/>
</dbReference>
<dbReference type="IntAct" id="P56760">
    <property type="interactions" value="1"/>
</dbReference>
<dbReference type="STRING" id="3702.P56760"/>
<dbReference type="PaxDb" id="3702-ATCG00140.1"/>
<dbReference type="EnsemblPlants" id="ATCG00140.1">
    <property type="protein sequence ID" value="ATCG00140.1"/>
    <property type="gene ID" value="ATCG00140"/>
</dbReference>
<dbReference type="GeneID" id="844788"/>
<dbReference type="Gramene" id="ATCG00140.1">
    <property type="protein sequence ID" value="ATCG00140.1"/>
    <property type="gene ID" value="ATCG00140"/>
</dbReference>
<dbReference type="KEGG" id="ath:ArthCp009"/>
<dbReference type="Araport" id="ATCG00140"/>
<dbReference type="TAIR" id="ATCG00140">
    <property type="gene designation" value="ATPH"/>
</dbReference>
<dbReference type="eggNOG" id="KOG0232">
    <property type="taxonomic scope" value="Eukaryota"/>
</dbReference>
<dbReference type="HOGENOM" id="CLU_148047_2_0_1"/>
<dbReference type="InParanoid" id="P56760"/>
<dbReference type="OMA" id="QPELMNE"/>
<dbReference type="BioCyc" id="ARA:ATCG00140-MONOMER"/>
<dbReference type="PRO" id="PR:P56760"/>
<dbReference type="Proteomes" id="UP000006548">
    <property type="component" value="Chloroplast Pltd"/>
</dbReference>
<dbReference type="ExpressionAtlas" id="P56760">
    <property type="expression patterns" value="baseline and differential"/>
</dbReference>
<dbReference type="GO" id="GO:0009534">
    <property type="term" value="C:chloroplast thylakoid"/>
    <property type="evidence" value="ECO:0007005"/>
    <property type="project" value="TAIR"/>
</dbReference>
<dbReference type="GO" id="GO:0009535">
    <property type="term" value="C:chloroplast thylakoid membrane"/>
    <property type="evidence" value="ECO:0007005"/>
    <property type="project" value="TAIR"/>
</dbReference>
<dbReference type="GO" id="GO:0045259">
    <property type="term" value="C:proton-transporting ATP synthase complex"/>
    <property type="evidence" value="ECO:0007669"/>
    <property type="project" value="UniProtKB-KW"/>
</dbReference>
<dbReference type="GO" id="GO:0033177">
    <property type="term" value="C:proton-transporting two-sector ATPase complex, proton-transporting domain"/>
    <property type="evidence" value="ECO:0007669"/>
    <property type="project" value="InterPro"/>
</dbReference>
<dbReference type="GO" id="GO:0008289">
    <property type="term" value="F:lipid binding"/>
    <property type="evidence" value="ECO:0007669"/>
    <property type="project" value="UniProtKB-KW"/>
</dbReference>
<dbReference type="GO" id="GO:0046933">
    <property type="term" value="F:proton-transporting ATP synthase activity, rotational mechanism"/>
    <property type="evidence" value="ECO:0007669"/>
    <property type="project" value="UniProtKB-UniRule"/>
</dbReference>
<dbReference type="CDD" id="cd18183">
    <property type="entry name" value="ATP-synt_Fo_c_ATPH"/>
    <property type="match status" value="1"/>
</dbReference>
<dbReference type="FunFam" id="1.20.20.10:FF:000001">
    <property type="entry name" value="ATP synthase subunit c, chloroplastic"/>
    <property type="match status" value="1"/>
</dbReference>
<dbReference type="Gene3D" id="1.20.20.10">
    <property type="entry name" value="F1F0 ATP synthase subunit C"/>
    <property type="match status" value="1"/>
</dbReference>
<dbReference type="HAMAP" id="MF_01396">
    <property type="entry name" value="ATP_synth_c_bact"/>
    <property type="match status" value="1"/>
</dbReference>
<dbReference type="InterPro" id="IPR005953">
    <property type="entry name" value="ATP_synth_csu_bac/chlpt"/>
</dbReference>
<dbReference type="InterPro" id="IPR000454">
    <property type="entry name" value="ATP_synth_F0_csu"/>
</dbReference>
<dbReference type="InterPro" id="IPR020537">
    <property type="entry name" value="ATP_synth_F0_csu_DDCD_BS"/>
</dbReference>
<dbReference type="InterPro" id="IPR038662">
    <property type="entry name" value="ATP_synth_F0_csu_sf"/>
</dbReference>
<dbReference type="InterPro" id="IPR002379">
    <property type="entry name" value="ATPase_proteolipid_c-like_dom"/>
</dbReference>
<dbReference type="InterPro" id="IPR035921">
    <property type="entry name" value="F/V-ATP_Csub_sf"/>
</dbReference>
<dbReference type="NCBIfam" id="TIGR01260">
    <property type="entry name" value="ATP_synt_c"/>
    <property type="match status" value="1"/>
</dbReference>
<dbReference type="NCBIfam" id="NF005608">
    <property type="entry name" value="PRK07354.1"/>
    <property type="match status" value="1"/>
</dbReference>
<dbReference type="PANTHER" id="PTHR10031">
    <property type="entry name" value="ATP SYNTHASE LIPID-BINDING PROTEIN, MITOCHONDRIAL"/>
    <property type="match status" value="1"/>
</dbReference>
<dbReference type="PANTHER" id="PTHR10031:SF0">
    <property type="entry name" value="ATPASE PROTEIN 9"/>
    <property type="match status" value="1"/>
</dbReference>
<dbReference type="Pfam" id="PF00137">
    <property type="entry name" value="ATP-synt_C"/>
    <property type="match status" value="1"/>
</dbReference>
<dbReference type="PRINTS" id="PR00124">
    <property type="entry name" value="ATPASEC"/>
</dbReference>
<dbReference type="SUPFAM" id="SSF81333">
    <property type="entry name" value="F1F0 ATP synthase subunit C"/>
    <property type="match status" value="1"/>
</dbReference>
<dbReference type="PROSITE" id="PS00605">
    <property type="entry name" value="ATPASE_C"/>
    <property type="match status" value="1"/>
</dbReference>
<protein>
    <recommendedName>
        <fullName evidence="1">ATP synthase subunit c, chloroplastic</fullName>
    </recommendedName>
    <alternativeName>
        <fullName evidence="1">ATP synthase F(0) sector subunit c</fullName>
    </alternativeName>
    <alternativeName>
        <fullName evidence="1">ATPase subunit III</fullName>
    </alternativeName>
    <alternativeName>
        <fullName evidence="1">F-type ATPase subunit c</fullName>
        <shortName evidence="1">F-ATPase subunit c</shortName>
    </alternativeName>
    <alternativeName>
        <fullName evidence="1">Lipid-binding protein</fullName>
    </alternativeName>
</protein>
<keyword id="KW-0066">ATP synthesis</keyword>
<keyword id="KW-0138">CF(0)</keyword>
<keyword id="KW-0150">Chloroplast</keyword>
<keyword id="KW-0375">Hydrogen ion transport</keyword>
<keyword id="KW-0406">Ion transport</keyword>
<keyword id="KW-0446">Lipid-binding</keyword>
<keyword id="KW-0472">Membrane</keyword>
<keyword id="KW-0934">Plastid</keyword>
<keyword id="KW-1185">Reference proteome</keyword>
<keyword id="KW-0793">Thylakoid</keyword>
<keyword id="KW-0812">Transmembrane</keyword>
<keyword id="KW-1133">Transmembrane helix</keyword>
<keyword id="KW-0813">Transport</keyword>
<gene>
    <name evidence="1" type="primary">atpH</name>
    <name type="ordered locus">AtCg00140</name>
</gene>
<geneLocation type="chloroplast"/>
<sequence length="81" mass="7976">MNPLVSAASVIAAGLAVGLASIGPGVGQGTAAGQAVEGIARQPEAEGKIRGTLLLSLAFMEALTIYGLVVALALLFANPFV</sequence>
<organism>
    <name type="scientific">Arabidopsis thaliana</name>
    <name type="common">Mouse-ear cress</name>
    <dbReference type="NCBI Taxonomy" id="3702"/>
    <lineage>
        <taxon>Eukaryota</taxon>
        <taxon>Viridiplantae</taxon>
        <taxon>Streptophyta</taxon>
        <taxon>Embryophyta</taxon>
        <taxon>Tracheophyta</taxon>
        <taxon>Spermatophyta</taxon>
        <taxon>Magnoliopsida</taxon>
        <taxon>eudicotyledons</taxon>
        <taxon>Gunneridae</taxon>
        <taxon>Pentapetalae</taxon>
        <taxon>rosids</taxon>
        <taxon>malvids</taxon>
        <taxon>Brassicales</taxon>
        <taxon>Brassicaceae</taxon>
        <taxon>Camelineae</taxon>
        <taxon>Arabidopsis</taxon>
    </lineage>
</organism>
<evidence type="ECO:0000255" key="1">
    <source>
        <dbReference type="HAMAP-Rule" id="MF_01396"/>
    </source>
</evidence>
<accession>P56760</accession>
<name>ATPH_ARATH</name>
<proteinExistence type="inferred from homology"/>
<reference key="1">
    <citation type="journal article" date="1999" name="DNA Res.">
        <title>Complete structure of the chloroplast genome of Arabidopsis thaliana.</title>
        <authorList>
            <person name="Sato S."/>
            <person name="Nakamura Y."/>
            <person name="Kaneko T."/>
            <person name="Asamizu E."/>
            <person name="Tabata S."/>
        </authorList>
    </citation>
    <scope>NUCLEOTIDE SEQUENCE [LARGE SCALE GENOMIC DNA]</scope>
    <source>
        <strain>cv. Columbia</strain>
    </source>
</reference>
<comment type="function">
    <text evidence="1">F(1)F(0) ATP synthase produces ATP from ADP in the presence of a proton or sodium gradient. F-type ATPases consist of two structural domains, F(1) containing the extramembraneous catalytic core and F(0) containing the membrane proton channel, linked together by a central stalk and a peripheral stalk. During catalysis, ATP synthesis in the catalytic domain of F(1) is coupled via a rotary mechanism of the central stalk subunits to proton translocation.</text>
</comment>
<comment type="function">
    <text evidence="1">Key component of the F(0) channel; it plays a direct role in translocation across the membrane. A homomeric c-ring of between 10-14 subunits forms the central stalk rotor element with the F(1) delta and epsilon subunits.</text>
</comment>
<comment type="subunit">
    <text evidence="1">F-type ATPases have 2 components, F(1) - the catalytic core - and F(0) - the membrane proton channel. F(1) has five subunits: alpha(3), beta(3), gamma(1), delta(1), epsilon(1). F(0) has four main subunits: a(1), b(1), b'(1) and c(10-14). The alpha and beta chains form an alternating ring which encloses part of the gamma chain. F(1) is attached to F(0) by a central stalk formed by the gamma and epsilon chains, while a peripheral stalk is formed by the delta, b and b' chains.</text>
</comment>
<comment type="subcellular location">
    <subcellularLocation>
        <location evidence="1">Plastid</location>
        <location evidence="1">Chloroplast thylakoid membrane</location>
        <topology evidence="1">Multi-pass membrane protein</topology>
    </subcellularLocation>
</comment>
<comment type="miscellaneous">
    <text>In plastids the F-type ATPase is also known as CF(1)CF(0).</text>
</comment>
<comment type="miscellaneous">
    <text>Dicyclohexylcarbodiimide (DCDD) inhibits ATPase.</text>
</comment>
<comment type="similarity">
    <text evidence="1">Belongs to the ATPase C chain family.</text>
</comment>
<feature type="chain" id="PRO_0000112183" description="ATP synthase subunit c, chloroplastic">
    <location>
        <begin position="1"/>
        <end position="81"/>
    </location>
</feature>
<feature type="transmembrane region" description="Helical" evidence="1">
    <location>
        <begin position="7"/>
        <end position="27"/>
    </location>
</feature>
<feature type="transmembrane region" description="Helical" evidence="1">
    <location>
        <begin position="57"/>
        <end position="77"/>
    </location>
</feature>
<feature type="site" description="Reversibly protonated during proton transport" evidence="1">
    <location>
        <position position="61"/>
    </location>
</feature>